<gene>
    <name evidence="1" type="primary">hemH</name>
    <name type="ordered locus">NIS_0734</name>
</gene>
<name>HEMH_NITSB</name>
<evidence type="ECO:0000255" key="1">
    <source>
        <dbReference type="HAMAP-Rule" id="MF_00323"/>
    </source>
</evidence>
<feature type="chain" id="PRO_1000019331" description="Ferrochelatase">
    <location>
        <begin position="1"/>
        <end position="309"/>
    </location>
</feature>
<feature type="binding site" evidence="1">
    <location>
        <position position="187"/>
    </location>
    <ligand>
        <name>Fe cation</name>
        <dbReference type="ChEBI" id="CHEBI:24875"/>
    </ligand>
</feature>
<feature type="binding site" evidence="1">
    <location>
        <position position="265"/>
    </location>
    <ligand>
        <name>Fe cation</name>
        <dbReference type="ChEBI" id="CHEBI:24875"/>
    </ligand>
</feature>
<organism>
    <name type="scientific">Nitratiruptor sp. (strain SB155-2)</name>
    <dbReference type="NCBI Taxonomy" id="387092"/>
    <lineage>
        <taxon>Bacteria</taxon>
        <taxon>Pseudomonadati</taxon>
        <taxon>Campylobacterota</taxon>
        <taxon>Epsilonproteobacteria</taxon>
        <taxon>Nautiliales</taxon>
        <taxon>Nitratiruptoraceae</taxon>
        <taxon>Nitratiruptor</taxon>
    </lineage>
</organism>
<accession>A6Q2Y9</accession>
<protein>
    <recommendedName>
        <fullName evidence="1">Ferrochelatase</fullName>
        <ecNumber evidence="1">4.98.1.1</ecNumber>
    </recommendedName>
    <alternativeName>
        <fullName evidence="1">Heme synthase</fullName>
    </alternativeName>
    <alternativeName>
        <fullName evidence="1">Protoheme ferro-lyase</fullName>
    </alternativeName>
</protein>
<comment type="function">
    <text evidence="1">Catalyzes the ferrous insertion into protoporphyrin IX.</text>
</comment>
<comment type="catalytic activity">
    <reaction evidence="1">
        <text>heme b + 2 H(+) = protoporphyrin IX + Fe(2+)</text>
        <dbReference type="Rhea" id="RHEA:22584"/>
        <dbReference type="ChEBI" id="CHEBI:15378"/>
        <dbReference type="ChEBI" id="CHEBI:29033"/>
        <dbReference type="ChEBI" id="CHEBI:57306"/>
        <dbReference type="ChEBI" id="CHEBI:60344"/>
        <dbReference type="EC" id="4.98.1.1"/>
    </reaction>
</comment>
<comment type="pathway">
    <text evidence="1">Porphyrin-containing compound metabolism; protoheme biosynthesis; protoheme from protoporphyrin-IX: step 1/1.</text>
</comment>
<comment type="subcellular location">
    <subcellularLocation>
        <location evidence="1">Cytoplasm</location>
    </subcellularLocation>
</comment>
<comment type="similarity">
    <text evidence="1">Belongs to the ferrochelatase family.</text>
</comment>
<sequence>MKAIVLLNMGGPNNLEEVELFLRNMFNDKNILPIRNDLLRKFVAYMITQGRKKEARSNYEKLGGKSPLNFYTDRLIAKLQKRLPDVYVTKAMRYTPPFAKEAIKELMYHNVREVFLIPLYPHYSTTTTKSSLEDFYNMAKGVGYHARFHDIANFYENRLYNQAIIERIEEALDGEDTKEYELVFSAHSLPQKIIEKGDPYLQEVQEHVKILTSILEEKFSGYHLAFQSKLGPVKWLEPGLDEKLEELKGKKILVYPISFTLDNSETEFELHIEYAQIAQKIGVKKYKVARCPNESDRFVDALVDIYQRM</sequence>
<dbReference type="EC" id="4.98.1.1" evidence="1"/>
<dbReference type="EMBL" id="AP009178">
    <property type="protein sequence ID" value="BAF69848.1"/>
    <property type="molecule type" value="Genomic_DNA"/>
</dbReference>
<dbReference type="RefSeq" id="WP_012082111.1">
    <property type="nucleotide sequence ID" value="NC_009662.1"/>
</dbReference>
<dbReference type="SMR" id="A6Q2Y9"/>
<dbReference type="FunCoup" id="A6Q2Y9">
    <property type="interactions" value="353"/>
</dbReference>
<dbReference type="STRING" id="387092.NIS_0734"/>
<dbReference type="KEGG" id="nis:NIS_0734"/>
<dbReference type="eggNOG" id="COG0276">
    <property type="taxonomic scope" value="Bacteria"/>
</dbReference>
<dbReference type="HOGENOM" id="CLU_018884_4_1_7"/>
<dbReference type="InParanoid" id="A6Q2Y9"/>
<dbReference type="OrthoDB" id="9809741at2"/>
<dbReference type="UniPathway" id="UPA00252">
    <property type="reaction ID" value="UER00325"/>
</dbReference>
<dbReference type="Proteomes" id="UP000001118">
    <property type="component" value="Chromosome"/>
</dbReference>
<dbReference type="GO" id="GO:0005737">
    <property type="term" value="C:cytoplasm"/>
    <property type="evidence" value="ECO:0007669"/>
    <property type="project" value="UniProtKB-SubCell"/>
</dbReference>
<dbReference type="GO" id="GO:0004325">
    <property type="term" value="F:ferrochelatase activity"/>
    <property type="evidence" value="ECO:0007669"/>
    <property type="project" value="UniProtKB-UniRule"/>
</dbReference>
<dbReference type="GO" id="GO:0046872">
    <property type="term" value="F:metal ion binding"/>
    <property type="evidence" value="ECO:0007669"/>
    <property type="project" value="UniProtKB-KW"/>
</dbReference>
<dbReference type="GO" id="GO:0006783">
    <property type="term" value="P:heme biosynthetic process"/>
    <property type="evidence" value="ECO:0007669"/>
    <property type="project" value="UniProtKB-UniRule"/>
</dbReference>
<dbReference type="CDD" id="cd00419">
    <property type="entry name" value="Ferrochelatase_C"/>
    <property type="match status" value="1"/>
</dbReference>
<dbReference type="CDD" id="cd03411">
    <property type="entry name" value="Ferrochelatase_N"/>
    <property type="match status" value="1"/>
</dbReference>
<dbReference type="Gene3D" id="3.40.50.1400">
    <property type="match status" value="2"/>
</dbReference>
<dbReference type="HAMAP" id="MF_00323">
    <property type="entry name" value="Ferrochelatase"/>
    <property type="match status" value="1"/>
</dbReference>
<dbReference type="InterPro" id="IPR001015">
    <property type="entry name" value="Ferrochelatase"/>
</dbReference>
<dbReference type="InterPro" id="IPR019772">
    <property type="entry name" value="Ferrochelatase_AS"/>
</dbReference>
<dbReference type="InterPro" id="IPR033644">
    <property type="entry name" value="Ferrochelatase_C"/>
</dbReference>
<dbReference type="InterPro" id="IPR033659">
    <property type="entry name" value="Ferrochelatase_N"/>
</dbReference>
<dbReference type="NCBIfam" id="TIGR00109">
    <property type="entry name" value="hemH"/>
    <property type="match status" value="1"/>
</dbReference>
<dbReference type="PANTHER" id="PTHR11108">
    <property type="entry name" value="FERROCHELATASE"/>
    <property type="match status" value="1"/>
</dbReference>
<dbReference type="PANTHER" id="PTHR11108:SF1">
    <property type="entry name" value="FERROCHELATASE, MITOCHONDRIAL"/>
    <property type="match status" value="1"/>
</dbReference>
<dbReference type="Pfam" id="PF00762">
    <property type="entry name" value="Ferrochelatase"/>
    <property type="match status" value="1"/>
</dbReference>
<dbReference type="SUPFAM" id="SSF53800">
    <property type="entry name" value="Chelatase"/>
    <property type="match status" value="1"/>
</dbReference>
<dbReference type="PROSITE" id="PS00534">
    <property type="entry name" value="FERROCHELATASE"/>
    <property type="match status" value="1"/>
</dbReference>
<proteinExistence type="inferred from homology"/>
<reference key="1">
    <citation type="journal article" date="2007" name="Proc. Natl. Acad. Sci. U.S.A.">
        <title>Deep-sea vent epsilon-proteobacterial genomes provide insights into emergence of pathogens.</title>
        <authorList>
            <person name="Nakagawa S."/>
            <person name="Takaki Y."/>
            <person name="Shimamura S."/>
            <person name="Reysenbach A.-L."/>
            <person name="Takai K."/>
            <person name="Horikoshi K."/>
        </authorList>
    </citation>
    <scope>NUCLEOTIDE SEQUENCE [LARGE SCALE GENOMIC DNA]</scope>
    <source>
        <strain>SB155-2</strain>
    </source>
</reference>
<keyword id="KW-0963">Cytoplasm</keyword>
<keyword id="KW-0350">Heme biosynthesis</keyword>
<keyword id="KW-0408">Iron</keyword>
<keyword id="KW-0456">Lyase</keyword>
<keyword id="KW-0479">Metal-binding</keyword>
<keyword id="KW-0627">Porphyrin biosynthesis</keyword>
<keyword id="KW-1185">Reference proteome</keyword>